<evidence type="ECO:0000255" key="1">
    <source>
        <dbReference type="HAMAP-Rule" id="MF_01527"/>
    </source>
</evidence>
<accession>A0B338</accession>
<keyword id="KW-0378">Hydrolase</keyword>
<comment type="function">
    <text evidence="1">Converts GTP to 7,8-dihydroneopterin triphosphate.</text>
</comment>
<comment type="catalytic activity">
    <reaction evidence="1">
        <text>GTP + H2O = 7,8-dihydroneopterin 3'-triphosphate + formate + H(+)</text>
        <dbReference type="Rhea" id="RHEA:17473"/>
        <dbReference type="ChEBI" id="CHEBI:15377"/>
        <dbReference type="ChEBI" id="CHEBI:15378"/>
        <dbReference type="ChEBI" id="CHEBI:15740"/>
        <dbReference type="ChEBI" id="CHEBI:37565"/>
        <dbReference type="ChEBI" id="CHEBI:58462"/>
        <dbReference type="EC" id="3.5.4.16"/>
    </reaction>
</comment>
<comment type="pathway">
    <text evidence="1">Cofactor biosynthesis; 7,8-dihydroneopterin triphosphate biosynthesis; 7,8-dihydroneopterin triphosphate from GTP: step 1/1.</text>
</comment>
<comment type="similarity">
    <text evidence="1">Belongs to the GTP cyclohydrolase IV family.</text>
</comment>
<dbReference type="EC" id="3.5.4.16" evidence="1"/>
<dbReference type="EMBL" id="CP000459">
    <property type="protein sequence ID" value="ABK12064.1"/>
    <property type="molecule type" value="Genomic_DNA"/>
</dbReference>
<dbReference type="SMR" id="A0B338"/>
<dbReference type="KEGG" id="bch:Bcen2424_5331"/>
<dbReference type="HOGENOM" id="CLU_062816_0_0_4"/>
<dbReference type="UniPathway" id="UPA00848">
    <property type="reaction ID" value="UER00151"/>
</dbReference>
<dbReference type="GO" id="GO:0003934">
    <property type="term" value="F:GTP cyclohydrolase I activity"/>
    <property type="evidence" value="ECO:0007669"/>
    <property type="project" value="UniProtKB-UniRule"/>
</dbReference>
<dbReference type="GO" id="GO:0046654">
    <property type="term" value="P:tetrahydrofolate biosynthetic process"/>
    <property type="evidence" value="ECO:0007669"/>
    <property type="project" value="UniProtKB-UniRule"/>
</dbReference>
<dbReference type="Gene3D" id="3.10.270.10">
    <property type="entry name" value="Urate Oxidase"/>
    <property type="match status" value="1"/>
</dbReference>
<dbReference type="HAMAP" id="MF_01527_B">
    <property type="entry name" value="GTP_cyclohydrol_B"/>
    <property type="match status" value="1"/>
</dbReference>
<dbReference type="InterPro" id="IPR022838">
    <property type="entry name" value="GTP_cyclohydrolase_FolE2"/>
</dbReference>
<dbReference type="InterPro" id="IPR003801">
    <property type="entry name" value="GTP_cyclohydrolase_FolE2/MptA"/>
</dbReference>
<dbReference type="NCBIfam" id="NF010200">
    <property type="entry name" value="PRK13674.1-1"/>
    <property type="match status" value="1"/>
</dbReference>
<dbReference type="PANTHER" id="PTHR36445">
    <property type="entry name" value="GTP CYCLOHYDROLASE MPTA"/>
    <property type="match status" value="1"/>
</dbReference>
<dbReference type="PANTHER" id="PTHR36445:SF1">
    <property type="entry name" value="GTP CYCLOHYDROLASE MPTA"/>
    <property type="match status" value="1"/>
</dbReference>
<dbReference type="Pfam" id="PF02649">
    <property type="entry name" value="GCHY-1"/>
    <property type="match status" value="1"/>
</dbReference>
<protein>
    <recommendedName>
        <fullName evidence="1">GTP cyclohydrolase FolE2 2</fullName>
        <ecNumber evidence="1">3.5.4.16</ecNumber>
    </recommendedName>
</protein>
<feature type="chain" id="PRO_0000289478" description="GTP cyclohydrolase FolE2 2">
    <location>
        <begin position="1"/>
        <end position="316"/>
    </location>
</feature>
<feature type="site" description="May be catalytically important" evidence="1">
    <location>
        <position position="166"/>
    </location>
</feature>
<name>GCH42_BURCH</name>
<reference key="1">
    <citation type="submission" date="2006-08" db="EMBL/GenBank/DDBJ databases">
        <title>Complete sequence of chromosome 2 of Burkholderia cenocepacia HI2424.</title>
        <authorList>
            <person name="Copeland A."/>
            <person name="Lucas S."/>
            <person name="Lapidus A."/>
            <person name="Barry K."/>
            <person name="Detter J.C."/>
            <person name="Glavina del Rio T."/>
            <person name="Hammon N."/>
            <person name="Israni S."/>
            <person name="Pitluck S."/>
            <person name="Chain P."/>
            <person name="Malfatti S."/>
            <person name="Shin M."/>
            <person name="Vergez L."/>
            <person name="Schmutz J."/>
            <person name="Larimer F."/>
            <person name="Land M."/>
            <person name="Hauser L."/>
            <person name="Kyrpides N."/>
            <person name="Kim E."/>
            <person name="LiPuma J.J."/>
            <person name="Gonzalez C.F."/>
            <person name="Konstantinidis K."/>
            <person name="Tiedje J.M."/>
            <person name="Richardson P."/>
        </authorList>
    </citation>
    <scope>NUCLEOTIDE SEQUENCE [LARGE SCALE GENOMIC DNA]</scope>
    <source>
        <strain>HI2424</strain>
    </source>
</reference>
<organism>
    <name type="scientific">Burkholderia cenocepacia (strain HI2424)</name>
    <dbReference type="NCBI Taxonomy" id="331272"/>
    <lineage>
        <taxon>Bacteria</taxon>
        <taxon>Pseudomonadati</taxon>
        <taxon>Pseudomonadota</taxon>
        <taxon>Betaproteobacteria</taxon>
        <taxon>Burkholderiales</taxon>
        <taxon>Burkholderiaceae</taxon>
        <taxon>Burkholderia</taxon>
        <taxon>Burkholderia cepacia complex</taxon>
    </lineage>
</organism>
<gene>
    <name evidence="1" type="primary">folE2-2</name>
    <name type="ordered locus">Bcen2424_5331</name>
</gene>
<sequence>MEKALHRISSMNAALPDISLTDAAPGRRPLEWVGMQGIDLPVVVAEPGCRRDVHARADVQVDLPAPQVKGIHMSRLYGLLDGLADGEALSPAGLQRMLRAMVDSHRDCETRSARVRLRFDLLARRTALVTEGLAGWKAYPVRLDATLAGDAFALRAQVTVVYSSTCPCSAALSRHWIEQAFLTAFGHEARVEPTAVAAWLKRHAMAATPHSQRSEAVVSVALPADGTTLGLLDLIDRVEQALGTPVQTAVKRADEQAFAVLNGGNLMFVEDAARRVQAALEDRHASPRVRVRHLESLHPHDAVAWAAPLREGADAC</sequence>
<proteinExistence type="inferred from homology"/>